<proteinExistence type="evidence at protein level"/>
<sequence length="446" mass="48918">MGKNVLLLGSGFVAQPVIDTLAANDDINVTVACRTLANAQALAKPSGSKAISLDVTDDSALDKVLADNDVVISLIPYTFHPNVVKSAIRTKTDVVTSSYISPALRELEPEIVKAGITVMNEIGLDPGIDHLYAVKTIDEVHRAGGKLKSFLSYCGGLPAPEDSDNPLGYKFSWSSRGVLLALRNSAKYWKDGKIETVSSEDLMATAKPYFIYPGYAFVCYPNRDSTLFKDLYHIPEAETVIRGTLRYQGFPEFVKALVDMGMLKDDANEIFSKPIAWNEALKQYLGAKSTSKEDLIASIDSKATWKDDEDRERILSGFAWLGLFSDAKITPRGNALDTLCARLEELMQYEDNERDMVVLQHKFGIEWADGTTETRTSTLVDYGKVGGYSSMAATVGYPVAIATKFVLDGTIKGPGLLAPYSPEINDPIMKELKDKYGIYLKEKTVA</sequence>
<accession>P38999</accession>
<accession>D6W1M5</accession>
<accession>E9P930</accession>
<name>LYS9_YEAST</name>
<organism>
    <name type="scientific">Saccharomyces cerevisiae (strain ATCC 204508 / S288c)</name>
    <name type="common">Baker's yeast</name>
    <dbReference type="NCBI Taxonomy" id="559292"/>
    <lineage>
        <taxon>Eukaryota</taxon>
        <taxon>Fungi</taxon>
        <taxon>Dikarya</taxon>
        <taxon>Ascomycota</taxon>
        <taxon>Saccharomycotina</taxon>
        <taxon>Saccharomycetes</taxon>
        <taxon>Saccharomycetales</taxon>
        <taxon>Saccharomycetaceae</taxon>
        <taxon>Saccharomyces</taxon>
    </lineage>
</organism>
<feature type="chain" id="PRO_0000212839" description="Saccharopine dehydrogenase [NADP(+), L-glutamate-forming]">
    <location>
        <begin position="1"/>
        <end position="446"/>
    </location>
</feature>
<feature type="binding site" evidence="1">
    <location>
        <begin position="10"/>
        <end position="13"/>
    </location>
    <ligand>
        <name>NADP(+)</name>
        <dbReference type="ChEBI" id="CHEBI:58349"/>
    </ligand>
</feature>
<feature type="binding site" evidence="1">
    <location>
        <begin position="33"/>
        <end position="35"/>
    </location>
    <ligand>
        <name>NADP(+)</name>
        <dbReference type="ChEBI" id="CHEBI:58349"/>
    </ligand>
</feature>
<feature type="binding site" evidence="1">
    <location>
        <begin position="54"/>
        <end position="55"/>
    </location>
    <ligand>
        <name>NADP(+)</name>
        <dbReference type="ChEBI" id="CHEBI:58349"/>
    </ligand>
</feature>
<feature type="binding site" evidence="1">
    <location>
        <position position="75"/>
    </location>
    <ligand>
        <name>NADP(+)</name>
        <dbReference type="ChEBI" id="CHEBI:58349"/>
    </ligand>
</feature>
<feature type="binding site" evidence="1">
    <location>
        <begin position="97"/>
        <end position="98"/>
    </location>
    <ligand>
        <name>NADP(+)</name>
        <dbReference type="ChEBI" id="CHEBI:58349"/>
    </ligand>
</feature>
<feature type="binding site" evidence="1">
    <location>
        <begin position="98"/>
        <end position="99"/>
    </location>
    <ligand>
        <name>L-saccharopine</name>
        <dbReference type="ChEBI" id="CHEBI:57951"/>
    </ligand>
</feature>
<feature type="binding site" evidence="1">
    <location>
        <begin position="124"/>
        <end position="126"/>
    </location>
    <ligand>
        <name>NADP(+)</name>
        <dbReference type="ChEBI" id="CHEBI:58349"/>
    </ligand>
</feature>
<feature type="binding site" evidence="1">
    <location>
        <position position="125"/>
    </location>
    <ligand>
        <name>L-saccharopine</name>
        <dbReference type="ChEBI" id="CHEBI:57951"/>
    </ligand>
</feature>
<feature type="binding site" evidence="1">
    <location>
        <position position="174"/>
    </location>
    <ligand>
        <name>NADP(+)</name>
        <dbReference type="ChEBI" id="CHEBI:58349"/>
    </ligand>
</feature>
<feature type="binding site" evidence="1">
    <location>
        <position position="223"/>
    </location>
    <ligand>
        <name>L-saccharopine</name>
        <dbReference type="ChEBI" id="CHEBI:57951"/>
    </ligand>
</feature>
<feature type="binding site" evidence="1">
    <location>
        <begin position="244"/>
        <end position="246"/>
    </location>
    <ligand>
        <name>L-saccharopine</name>
        <dbReference type="ChEBI" id="CHEBI:57951"/>
    </ligand>
</feature>
<feature type="sequence conflict" description="In Ref. 4; AAT93229." evidence="4" ref="4">
    <original>A</original>
    <variation>T</variation>
    <location>
        <position position="393"/>
    </location>
</feature>
<feature type="strand" evidence="5">
    <location>
        <begin position="3"/>
        <end position="8"/>
    </location>
</feature>
<feature type="helix" evidence="5">
    <location>
        <begin position="14"/>
        <end position="22"/>
    </location>
</feature>
<feature type="strand" evidence="5">
    <location>
        <begin position="27"/>
        <end position="35"/>
    </location>
</feature>
<feature type="helix" evidence="5">
    <location>
        <begin position="36"/>
        <end position="43"/>
    </location>
</feature>
<feature type="turn" evidence="5">
    <location>
        <begin position="44"/>
        <end position="47"/>
    </location>
</feature>
<feature type="strand" evidence="5">
    <location>
        <begin position="49"/>
        <end position="52"/>
    </location>
</feature>
<feature type="helix" evidence="5">
    <location>
        <begin position="58"/>
        <end position="66"/>
    </location>
</feature>
<feature type="strand" evidence="5">
    <location>
        <begin position="68"/>
        <end position="73"/>
    </location>
</feature>
<feature type="helix" evidence="5">
    <location>
        <begin position="77"/>
        <end position="79"/>
    </location>
</feature>
<feature type="helix" evidence="5">
    <location>
        <begin position="80"/>
        <end position="90"/>
    </location>
</feature>
<feature type="strand" evidence="5">
    <location>
        <begin position="93"/>
        <end position="96"/>
    </location>
</feature>
<feature type="helix" evidence="5">
    <location>
        <begin position="102"/>
        <end position="114"/>
    </location>
</feature>
<feature type="strand" evidence="5">
    <location>
        <begin position="117"/>
        <end position="119"/>
    </location>
</feature>
<feature type="turn" evidence="5">
    <location>
        <begin position="124"/>
        <end position="126"/>
    </location>
</feature>
<feature type="helix" evidence="5">
    <location>
        <begin position="128"/>
        <end position="142"/>
    </location>
</feature>
<feature type="strand" evidence="5">
    <location>
        <begin position="146"/>
        <end position="158"/>
    </location>
</feature>
<feature type="helix" evidence="5">
    <location>
        <begin position="160"/>
        <end position="162"/>
    </location>
</feature>
<feature type="strand" evidence="5">
    <location>
        <begin position="171"/>
        <end position="173"/>
    </location>
</feature>
<feature type="helix" evidence="5">
    <location>
        <begin position="176"/>
        <end position="180"/>
    </location>
</feature>
<feature type="helix" evidence="5">
    <location>
        <begin position="181"/>
        <end position="183"/>
    </location>
</feature>
<feature type="strand" evidence="5">
    <location>
        <begin position="186"/>
        <end position="190"/>
    </location>
</feature>
<feature type="strand" evidence="5">
    <location>
        <begin position="193"/>
        <end position="197"/>
    </location>
</feature>
<feature type="turn" evidence="5">
    <location>
        <begin position="199"/>
        <end position="201"/>
    </location>
</feature>
<feature type="helix" evidence="5">
    <location>
        <begin position="202"/>
        <end position="205"/>
    </location>
</feature>
<feature type="strand" evidence="5">
    <location>
        <begin position="217"/>
        <end position="221"/>
    </location>
</feature>
<feature type="helix" evidence="5">
    <location>
        <begin position="228"/>
        <end position="231"/>
    </location>
</feature>
<feature type="strand" evidence="5">
    <location>
        <begin position="238"/>
        <end position="247"/>
    </location>
</feature>
<feature type="helix" evidence="5">
    <location>
        <begin position="250"/>
        <end position="259"/>
    </location>
</feature>
<feature type="turn" evidence="5">
    <location>
        <begin position="260"/>
        <end position="263"/>
    </location>
</feature>
<feature type="helix" evidence="5">
    <location>
        <begin position="269"/>
        <end position="271"/>
    </location>
</feature>
<feature type="helix" evidence="5">
    <location>
        <begin position="277"/>
        <end position="285"/>
    </location>
</feature>
<feature type="strand" evidence="5">
    <location>
        <begin position="288"/>
        <end position="291"/>
    </location>
</feature>
<feature type="helix" evidence="5">
    <location>
        <begin position="292"/>
        <end position="300"/>
    </location>
</feature>
<feature type="helix" evidence="5">
    <location>
        <begin position="308"/>
        <end position="320"/>
    </location>
</feature>
<feature type="turn" evidence="5">
    <location>
        <begin position="321"/>
        <end position="324"/>
    </location>
</feature>
<feature type="helix" evidence="5">
    <location>
        <begin position="335"/>
        <end position="346"/>
    </location>
</feature>
<feature type="strand" evidence="5">
    <location>
        <begin position="355"/>
        <end position="366"/>
    </location>
</feature>
<feature type="strand" evidence="5">
    <location>
        <begin position="372"/>
        <end position="382"/>
    </location>
</feature>
<feature type="helix" evidence="5">
    <location>
        <begin position="390"/>
        <end position="407"/>
    </location>
</feature>
<feature type="strand" evidence="5">
    <location>
        <begin position="414"/>
        <end position="417"/>
    </location>
</feature>
<feature type="helix" evidence="5">
    <location>
        <begin position="422"/>
        <end position="436"/>
    </location>
</feature>
<feature type="strand" evidence="5">
    <location>
        <begin position="441"/>
        <end position="444"/>
    </location>
</feature>
<dbReference type="EC" id="1.5.1.10"/>
<dbReference type="EMBL" id="X77363">
    <property type="protein sequence ID" value="CAA54552.1"/>
    <property type="molecule type" value="Genomic_DNA"/>
</dbReference>
<dbReference type="EMBL" id="Z71665">
    <property type="protein sequence ID" value="CAA96331.1"/>
    <property type="molecule type" value="Genomic_DNA"/>
</dbReference>
<dbReference type="EMBL" id="AY693210">
    <property type="protein sequence ID" value="AAT93229.1"/>
    <property type="molecule type" value="Genomic_DNA"/>
</dbReference>
<dbReference type="EMBL" id="BK006947">
    <property type="protein sequence ID" value="DAA10591.1"/>
    <property type="molecule type" value="Genomic_DNA"/>
</dbReference>
<dbReference type="PIR" id="S41937">
    <property type="entry name" value="S41937"/>
</dbReference>
<dbReference type="RefSeq" id="NP_014448.1">
    <property type="nucleotide sequence ID" value="NM_001183227.1"/>
</dbReference>
<dbReference type="PDB" id="2AXQ">
    <property type="method" value="X-ray"/>
    <property type="resolution" value="1.70 A"/>
    <property type="chains" value="A=1-446"/>
</dbReference>
<dbReference type="PDBsum" id="2AXQ"/>
<dbReference type="SMR" id="P38999"/>
<dbReference type="BioGRID" id="35875">
    <property type="interactions" value="33"/>
</dbReference>
<dbReference type="DIP" id="DIP-776N"/>
<dbReference type="FunCoup" id="P38999">
    <property type="interactions" value="256"/>
</dbReference>
<dbReference type="IntAct" id="P38999">
    <property type="interactions" value="12"/>
</dbReference>
<dbReference type="MINT" id="P38999"/>
<dbReference type="STRING" id="4932.YNR050C"/>
<dbReference type="iPTMnet" id="P38999"/>
<dbReference type="PaxDb" id="4932-YNR050C"/>
<dbReference type="PeptideAtlas" id="P38999"/>
<dbReference type="EnsemblFungi" id="YNR050C_mRNA">
    <property type="protein sequence ID" value="YNR050C"/>
    <property type="gene ID" value="YNR050C"/>
</dbReference>
<dbReference type="GeneID" id="855786"/>
<dbReference type="KEGG" id="sce:YNR050C"/>
<dbReference type="AGR" id="SGD:S000005333"/>
<dbReference type="SGD" id="S000005333">
    <property type="gene designation" value="LYS9"/>
</dbReference>
<dbReference type="VEuPathDB" id="FungiDB:YNR050C"/>
<dbReference type="eggNOG" id="KOG0172">
    <property type="taxonomic scope" value="Eukaryota"/>
</dbReference>
<dbReference type="GeneTree" id="ENSGT00940000176061"/>
<dbReference type="HOGENOM" id="CLU_016207_3_1_1"/>
<dbReference type="InParanoid" id="P38999"/>
<dbReference type="OMA" id="WNYKFTW"/>
<dbReference type="OrthoDB" id="10059875at2759"/>
<dbReference type="BioCyc" id="YEAST:MONOMER3O-363"/>
<dbReference type="BRENDA" id="1.5.1.10">
    <property type="organism ID" value="984"/>
</dbReference>
<dbReference type="Reactome" id="R-SCE-71064">
    <property type="pathway name" value="Lysine catabolism"/>
</dbReference>
<dbReference type="UniPathway" id="UPA00033">
    <property type="reaction ID" value="UER00033"/>
</dbReference>
<dbReference type="BioGRID-ORCS" id="855786">
    <property type="hits" value="2 hits in 10 CRISPR screens"/>
</dbReference>
<dbReference type="CD-CODE" id="E03F929F">
    <property type="entry name" value="Stress granule"/>
</dbReference>
<dbReference type="EvolutionaryTrace" id="P38999"/>
<dbReference type="PRO" id="PR:P38999"/>
<dbReference type="Proteomes" id="UP000002311">
    <property type="component" value="Chromosome XIV"/>
</dbReference>
<dbReference type="RNAct" id="P38999">
    <property type="molecule type" value="protein"/>
</dbReference>
<dbReference type="GO" id="GO:0071944">
    <property type="term" value="C:cell periphery"/>
    <property type="evidence" value="ECO:0007005"/>
    <property type="project" value="SGD"/>
</dbReference>
<dbReference type="GO" id="GO:0005737">
    <property type="term" value="C:cytoplasm"/>
    <property type="evidence" value="ECO:0007005"/>
    <property type="project" value="SGD"/>
</dbReference>
<dbReference type="GO" id="GO:0004755">
    <property type="term" value="F:saccharopine dehydrogenase (NADP+, L-glutamate-forming) activity"/>
    <property type="evidence" value="ECO:0000314"/>
    <property type="project" value="SGD"/>
</dbReference>
<dbReference type="GO" id="GO:0004753">
    <property type="term" value="F:saccharopine dehydrogenase activity"/>
    <property type="evidence" value="ECO:0000318"/>
    <property type="project" value="GO_Central"/>
</dbReference>
<dbReference type="GO" id="GO:0019878">
    <property type="term" value="P:lysine biosynthetic process via aminoadipic acid"/>
    <property type="evidence" value="ECO:0000315"/>
    <property type="project" value="SGD"/>
</dbReference>
<dbReference type="FunFam" id="3.30.360.10:FF:000008">
    <property type="entry name" value="Alpha-aminoadipic semialdehyde synthase, mitochondrial"/>
    <property type="match status" value="1"/>
</dbReference>
<dbReference type="FunFam" id="3.40.50.720:FF:000072">
    <property type="entry name" value="Saccharopine dehydrogenase [NADP(+), L-glutamate-forming]"/>
    <property type="match status" value="1"/>
</dbReference>
<dbReference type="FunFam" id="1.10.1870.10:FF:000002">
    <property type="entry name" value="Saccharopine dehydrogenase Lys9"/>
    <property type="match status" value="1"/>
</dbReference>
<dbReference type="Gene3D" id="3.30.360.10">
    <property type="entry name" value="Dihydrodipicolinate Reductase, domain 2"/>
    <property type="match status" value="1"/>
</dbReference>
<dbReference type="Gene3D" id="1.10.1870.10">
    <property type="entry name" value="Domain 3, Saccharopine reductase"/>
    <property type="match status" value="1"/>
</dbReference>
<dbReference type="Gene3D" id="3.40.50.720">
    <property type="entry name" value="NAD(P)-binding Rossmann-like Domain"/>
    <property type="match status" value="1"/>
</dbReference>
<dbReference type="InterPro" id="IPR051168">
    <property type="entry name" value="AASS"/>
</dbReference>
<dbReference type="InterPro" id="IPR036291">
    <property type="entry name" value="NAD(P)-bd_dom_sf"/>
</dbReference>
<dbReference type="InterPro" id="IPR032095">
    <property type="entry name" value="Sacchrp_dh-like_C"/>
</dbReference>
<dbReference type="InterPro" id="IPR005097">
    <property type="entry name" value="Sacchrp_dh_NADP-bd"/>
</dbReference>
<dbReference type="PANTHER" id="PTHR11133:SF22">
    <property type="entry name" value="ALPHA-AMINOADIPIC SEMIALDEHYDE SYNTHASE, MITOCHONDRIAL"/>
    <property type="match status" value="1"/>
</dbReference>
<dbReference type="PANTHER" id="PTHR11133">
    <property type="entry name" value="SACCHAROPINE DEHYDROGENASE"/>
    <property type="match status" value="1"/>
</dbReference>
<dbReference type="Pfam" id="PF16653">
    <property type="entry name" value="Sacchrp_dh_C"/>
    <property type="match status" value="1"/>
</dbReference>
<dbReference type="Pfam" id="PF03435">
    <property type="entry name" value="Sacchrp_dh_NADP"/>
    <property type="match status" value="1"/>
</dbReference>
<dbReference type="SUPFAM" id="SSF55347">
    <property type="entry name" value="Glyceraldehyde-3-phosphate dehydrogenase-like, C-terminal domain"/>
    <property type="match status" value="1"/>
</dbReference>
<dbReference type="SUPFAM" id="SSF51735">
    <property type="entry name" value="NAD(P)-binding Rossmann-fold domains"/>
    <property type="match status" value="1"/>
</dbReference>
<keyword id="KW-0002">3D-structure</keyword>
<keyword id="KW-0028">Amino-acid biosynthesis</keyword>
<keyword id="KW-0903">Direct protein sequencing</keyword>
<keyword id="KW-0457">Lysine biosynthesis</keyword>
<keyword id="KW-0521">NADP</keyword>
<keyword id="KW-0560">Oxidoreductase</keyword>
<keyword id="KW-1185">Reference proteome</keyword>
<gene>
    <name type="primary">LYS9</name>
    <name type="synonym">LYS13</name>
    <name type="ordered locus">YNR050C</name>
    <name type="ORF">N3461</name>
</gene>
<protein>
    <recommendedName>
        <fullName>Saccharopine dehydrogenase [NADP(+), L-glutamate-forming]</fullName>
        <ecNumber>1.5.1.10</ecNumber>
    </recommendedName>
    <alternativeName>
        <fullName>Saccharopine reductase</fullName>
    </alternativeName>
</protein>
<reference key="1">
    <citation type="submission" date="1994-01" db="EMBL/GenBank/DDBJ databases">
        <authorList>
            <person name="Feller A."/>
        </authorList>
    </citation>
    <scope>NUCLEOTIDE SEQUENCE [GENOMIC DNA]</scope>
    <source>
        <strain>1278B</strain>
    </source>
</reference>
<reference key="2">
    <citation type="journal article" date="1997" name="Nature">
        <title>The nucleotide sequence of Saccharomyces cerevisiae chromosome XIV and its evolutionary implications.</title>
        <authorList>
            <person name="Philippsen P."/>
            <person name="Kleine K."/>
            <person name="Poehlmann R."/>
            <person name="Duesterhoeft A."/>
            <person name="Hamberg K."/>
            <person name="Hegemann J.H."/>
            <person name="Obermaier B."/>
            <person name="Urrestarazu L.A."/>
            <person name="Aert R."/>
            <person name="Albermann K."/>
            <person name="Altmann R."/>
            <person name="Andre B."/>
            <person name="Baladron V."/>
            <person name="Ballesta J.P.G."/>
            <person name="Becam A.-M."/>
            <person name="Beinhauer J.D."/>
            <person name="Boskovic J."/>
            <person name="Buitrago M.J."/>
            <person name="Bussereau F."/>
            <person name="Coster F."/>
            <person name="Crouzet M."/>
            <person name="D'Angelo M."/>
            <person name="Dal Pero F."/>
            <person name="De Antoni A."/>
            <person name="del Rey F."/>
            <person name="Doignon F."/>
            <person name="Domdey H."/>
            <person name="Dubois E."/>
            <person name="Fiedler T.A."/>
            <person name="Fleig U."/>
            <person name="Floeth M."/>
            <person name="Fritz C."/>
            <person name="Gaillardin C."/>
            <person name="Garcia-Cantalejo J.M."/>
            <person name="Glansdorff N."/>
            <person name="Goffeau A."/>
            <person name="Gueldener U."/>
            <person name="Herbert C.J."/>
            <person name="Heumann K."/>
            <person name="Heuss-Neitzel D."/>
            <person name="Hilbert H."/>
            <person name="Hinni K."/>
            <person name="Iraqui Houssaini I."/>
            <person name="Jacquet M."/>
            <person name="Jimenez A."/>
            <person name="Jonniaux J.-L."/>
            <person name="Karpfinger-Hartl L."/>
            <person name="Lanfranchi G."/>
            <person name="Lepingle A."/>
            <person name="Levesque H."/>
            <person name="Lyck R."/>
            <person name="Maftahi M."/>
            <person name="Mallet L."/>
            <person name="Maurer C.T.C."/>
            <person name="Messenguy F."/>
            <person name="Mewes H.-W."/>
            <person name="Moestl D."/>
            <person name="Nasr F."/>
            <person name="Nicaud J.-M."/>
            <person name="Niedenthal R.K."/>
            <person name="Pandolfo D."/>
            <person name="Pierard A."/>
            <person name="Piravandi E."/>
            <person name="Planta R.J."/>
            <person name="Pohl T.M."/>
            <person name="Purnelle B."/>
            <person name="Rebischung C."/>
            <person name="Remacha M.A."/>
            <person name="Revuelta J.L."/>
            <person name="Rinke M."/>
            <person name="Saiz J.E."/>
            <person name="Sartorello F."/>
            <person name="Scherens B."/>
            <person name="Sen-Gupta M."/>
            <person name="Soler-Mira A."/>
            <person name="Urbanus J.H.M."/>
            <person name="Valle G."/>
            <person name="Van Dyck L."/>
            <person name="Verhasselt P."/>
            <person name="Vierendeels F."/>
            <person name="Vissers S."/>
            <person name="Voet M."/>
            <person name="Volckaert G."/>
            <person name="Wach A."/>
            <person name="Wambutt R."/>
            <person name="Wedler H."/>
            <person name="Zollner A."/>
            <person name="Hani J."/>
        </authorList>
    </citation>
    <scope>NUCLEOTIDE SEQUENCE [LARGE SCALE GENOMIC DNA]</scope>
    <source>
        <strain>ATCC 204508 / S288c</strain>
    </source>
</reference>
<reference key="3">
    <citation type="journal article" date="2014" name="G3 (Bethesda)">
        <title>The reference genome sequence of Saccharomyces cerevisiae: Then and now.</title>
        <authorList>
            <person name="Engel S.R."/>
            <person name="Dietrich F.S."/>
            <person name="Fisk D.G."/>
            <person name="Binkley G."/>
            <person name="Balakrishnan R."/>
            <person name="Costanzo M.C."/>
            <person name="Dwight S.S."/>
            <person name="Hitz B.C."/>
            <person name="Karra K."/>
            <person name="Nash R.S."/>
            <person name="Weng S."/>
            <person name="Wong E.D."/>
            <person name="Lloyd P."/>
            <person name="Skrzypek M.S."/>
            <person name="Miyasato S.R."/>
            <person name="Simison M."/>
            <person name="Cherry J.M."/>
        </authorList>
    </citation>
    <scope>GENOME REANNOTATION</scope>
    <source>
        <strain>ATCC 204508 / S288c</strain>
    </source>
</reference>
<reference key="4">
    <citation type="journal article" date="2007" name="Genome Res.">
        <title>Approaching a complete repository of sequence-verified protein-encoding clones for Saccharomyces cerevisiae.</title>
        <authorList>
            <person name="Hu Y."/>
            <person name="Rolfs A."/>
            <person name="Bhullar B."/>
            <person name="Murthy T.V.S."/>
            <person name="Zhu C."/>
            <person name="Berger M.F."/>
            <person name="Camargo A.A."/>
            <person name="Kelley F."/>
            <person name="McCarron S."/>
            <person name="Jepson D."/>
            <person name="Richardson A."/>
            <person name="Raphael J."/>
            <person name="Moreira D."/>
            <person name="Taycher E."/>
            <person name="Zuo D."/>
            <person name="Mohr S."/>
            <person name="Kane M.F."/>
            <person name="Williamson J."/>
            <person name="Simpson A.J.G."/>
            <person name="Bulyk M.L."/>
            <person name="Harlow E."/>
            <person name="Marsischky G."/>
            <person name="Kolodner R.D."/>
            <person name="LaBaer J."/>
        </authorList>
    </citation>
    <scope>NUCLEOTIDE SEQUENCE [GENOMIC DNA]</scope>
    <source>
        <strain>ATCC 204508 / S288c</strain>
    </source>
</reference>
<reference key="5">
    <citation type="journal article" date="1996" name="FEMS Microbiol. Lett.">
        <title>Protein expression during exponential growth in 0.7 M NaCl medium of Saccharomyces cerevisiae.</title>
        <authorList>
            <person name="Norbeck J."/>
            <person name="Blomberg A."/>
        </authorList>
    </citation>
    <scope>PROTEIN SEQUENCE OF 314-324</scope>
    <source>
        <strain>ATCC 38531 / Y41</strain>
    </source>
</reference>
<reference key="6">
    <citation type="journal article" date="2003" name="Nature">
        <title>Global analysis of protein expression in yeast.</title>
        <authorList>
            <person name="Ghaemmaghami S."/>
            <person name="Huh W.-K."/>
            <person name="Bower K."/>
            <person name="Howson R.W."/>
            <person name="Belle A."/>
            <person name="Dephoure N."/>
            <person name="O'Shea E.K."/>
            <person name="Weissman J.S."/>
        </authorList>
    </citation>
    <scope>LEVEL OF PROTEIN EXPRESSION [LARGE SCALE ANALYSIS]</scope>
</reference>
<reference key="7">
    <citation type="journal article" date="2005" name="Mol. Cell. Biol.">
        <title>Trm11p and Trm112p are both required for the formation of 2-methylguanosine at position 10 in yeast tRNA.</title>
        <authorList>
            <person name="Purushothaman S.K."/>
            <person name="Bujnicki J.M."/>
            <person name="Grosjean H."/>
            <person name="Lapeyre B."/>
        </authorList>
    </citation>
    <scope>INTERACTION WITH TRM112</scope>
</reference>
<comment type="catalytic activity">
    <reaction>
        <text>L-saccharopine + NADP(+) + H2O = (S)-2-amino-6-oxohexanoate + L-glutamate + NADPH + H(+)</text>
        <dbReference type="Rhea" id="RHEA:10020"/>
        <dbReference type="ChEBI" id="CHEBI:15377"/>
        <dbReference type="ChEBI" id="CHEBI:15378"/>
        <dbReference type="ChEBI" id="CHEBI:29985"/>
        <dbReference type="ChEBI" id="CHEBI:57783"/>
        <dbReference type="ChEBI" id="CHEBI:57951"/>
        <dbReference type="ChEBI" id="CHEBI:58321"/>
        <dbReference type="ChEBI" id="CHEBI:58349"/>
        <dbReference type="EC" id="1.5.1.10"/>
    </reaction>
</comment>
<comment type="pathway">
    <text>Amino-acid biosynthesis; L-lysine biosynthesis via AAA pathway; L-lysine from L-alpha-aminoadipate (fungal route): step 2/3.</text>
</comment>
<comment type="subunit">
    <text evidence="3">Interacts with TRM112.</text>
</comment>
<comment type="miscellaneous">
    <text evidence="2">Present with 57500 molecules/cell in log phase SD medium.</text>
</comment>
<comment type="similarity">
    <text evidence="4">Belongs to the saccharopine dehydrogenase family.</text>
</comment>
<evidence type="ECO:0000250" key="1">
    <source>
        <dbReference type="UniProtKB" id="Q9P4R4"/>
    </source>
</evidence>
<evidence type="ECO:0000269" key="2">
    <source>
    </source>
</evidence>
<evidence type="ECO:0000269" key="3">
    <source>
    </source>
</evidence>
<evidence type="ECO:0000305" key="4"/>
<evidence type="ECO:0007829" key="5">
    <source>
        <dbReference type="PDB" id="2AXQ"/>
    </source>
</evidence>